<evidence type="ECO:0000255" key="1"/>
<evidence type="ECO:0000305" key="2"/>
<dbReference type="EMBL" id="AE005174">
    <property type="protein sequence ID" value="AAG58577.1"/>
    <property type="molecule type" value="Genomic_DNA"/>
</dbReference>
<dbReference type="EMBL" id="BA000007">
    <property type="protein sequence ID" value="BAB37740.1"/>
    <property type="molecule type" value="Genomic_DNA"/>
</dbReference>
<dbReference type="PIR" id="E86014">
    <property type="entry name" value="E86014"/>
</dbReference>
<dbReference type="PIR" id="E91168">
    <property type="entry name" value="E91168"/>
</dbReference>
<dbReference type="RefSeq" id="NP_312344.1">
    <property type="nucleotide sequence ID" value="NC_002695.1"/>
</dbReference>
<dbReference type="RefSeq" id="WP_000964718.1">
    <property type="nucleotide sequence ID" value="NZ_VOAI01000004.1"/>
</dbReference>
<dbReference type="STRING" id="155864.Z4842"/>
<dbReference type="GeneID" id="915828"/>
<dbReference type="KEGG" id="ece:Z4842"/>
<dbReference type="KEGG" id="ecs:ECs_4317"/>
<dbReference type="PATRIC" id="fig|386585.9.peg.4510"/>
<dbReference type="eggNOG" id="COG3714">
    <property type="taxonomic scope" value="Bacteria"/>
</dbReference>
<dbReference type="HOGENOM" id="CLU_079086_6_1_6"/>
<dbReference type="OMA" id="CYSKSFW"/>
<dbReference type="Proteomes" id="UP000000558">
    <property type="component" value="Chromosome"/>
</dbReference>
<dbReference type="Proteomes" id="UP000002519">
    <property type="component" value="Chromosome"/>
</dbReference>
<dbReference type="GO" id="GO:0005886">
    <property type="term" value="C:plasma membrane"/>
    <property type="evidence" value="ECO:0007669"/>
    <property type="project" value="UniProtKB-SubCell"/>
</dbReference>
<dbReference type="GO" id="GO:0016787">
    <property type="term" value="F:hydrolase activity"/>
    <property type="evidence" value="ECO:0007669"/>
    <property type="project" value="TreeGrafter"/>
</dbReference>
<dbReference type="InterPro" id="IPR012506">
    <property type="entry name" value="TMEM86B-like"/>
</dbReference>
<dbReference type="PANTHER" id="PTHR31885">
    <property type="entry name" value="GH04784P"/>
    <property type="match status" value="1"/>
</dbReference>
<dbReference type="PANTHER" id="PTHR31885:SF6">
    <property type="entry name" value="GH04784P"/>
    <property type="match status" value="1"/>
</dbReference>
<dbReference type="Pfam" id="PF07947">
    <property type="entry name" value="YhhN"/>
    <property type="match status" value="1"/>
</dbReference>
<name>YHHN_ECO57</name>
<organism>
    <name type="scientific">Escherichia coli O157:H7</name>
    <dbReference type="NCBI Taxonomy" id="83334"/>
    <lineage>
        <taxon>Bacteria</taxon>
        <taxon>Pseudomonadati</taxon>
        <taxon>Pseudomonadota</taxon>
        <taxon>Gammaproteobacteria</taxon>
        <taxon>Enterobacterales</taxon>
        <taxon>Enterobacteriaceae</taxon>
        <taxon>Escherichia</taxon>
    </lineage>
</organism>
<accession>P0ADJ1</accession>
<accession>P37616</accession>
<reference key="1">
    <citation type="journal article" date="2001" name="Nature">
        <title>Genome sequence of enterohaemorrhagic Escherichia coli O157:H7.</title>
        <authorList>
            <person name="Perna N.T."/>
            <person name="Plunkett G. III"/>
            <person name="Burland V."/>
            <person name="Mau B."/>
            <person name="Glasner J.D."/>
            <person name="Rose D.J."/>
            <person name="Mayhew G.F."/>
            <person name="Evans P.S."/>
            <person name="Gregor J."/>
            <person name="Kirkpatrick H.A."/>
            <person name="Posfai G."/>
            <person name="Hackett J."/>
            <person name="Klink S."/>
            <person name="Boutin A."/>
            <person name="Shao Y."/>
            <person name="Miller L."/>
            <person name="Grotbeck E.J."/>
            <person name="Davis N.W."/>
            <person name="Lim A."/>
            <person name="Dimalanta E.T."/>
            <person name="Potamousis K."/>
            <person name="Apodaca J."/>
            <person name="Anantharaman T.S."/>
            <person name="Lin J."/>
            <person name="Yen G."/>
            <person name="Schwartz D.C."/>
            <person name="Welch R.A."/>
            <person name="Blattner F.R."/>
        </authorList>
    </citation>
    <scope>NUCLEOTIDE SEQUENCE [LARGE SCALE GENOMIC DNA]</scope>
    <source>
        <strain>O157:H7 / EDL933 / ATCC 700927 / EHEC</strain>
    </source>
</reference>
<reference key="2">
    <citation type="journal article" date="2001" name="DNA Res.">
        <title>Complete genome sequence of enterohemorrhagic Escherichia coli O157:H7 and genomic comparison with a laboratory strain K-12.</title>
        <authorList>
            <person name="Hayashi T."/>
            <person name="Makino K."/>
            <person name="Ohnishi M."/>
            <person name="Kurokawa K."/>
            <person name="Ishii K."/>
            <person name="Yokoyama K."/>
            <person name="Han C.-G."/>
            <person name="Ohtsubo E."/>
            <person name="Nakayama K."/>
            <person name="Murata T."/>
            <person name="Tanaka M."/>
            <person name="Tobe T."/>
            <person name="Iida T."/>
            <person name="Takami H."/>
            <person name="Honda T."/>
            <person name="Sasakawa C."/>
            <person name="Ogasawara N."/>
            <person name="Yasunaga T."/>
            <person name="Kuhara S."/>
            <person name="Shiba T."/>
            <person name="Hattori M."/>
            <person name="Shinagawa H."/>
        </authorList>
    </citation>
    <scope>NUCLEOTIDE SEQUENCE [LARGE SCALE GENOMIC DNA]</scope>
    <source>
        <strain>O157:H7 / Sakai / RIMD 0509952 / EHEC</strain>
    </source>
</reference>
<gene>
    <name type="primary">yhhN</name>
    <name type="ordered locus">Z4842</name>
    <name type="ordered locus">ECs4317</name>
</gene>
<sequence>MLWSFIAVCLSAWLSVDASYRGPTWQRWVFKPLTLLLLLLLAWQAPMFDAISYLVLAGLCASLLGDALTLLPRQRLMYAIGAFFLSHLLYTIYFASQMTLSFFWPLPLVLLVLGALLLAIIWTRLEEYRWPICTFIGMTLVMVWLAGELWFFRPTAPALSAFVGASLLFISNFVWLGSHYRRRFRADNAIAAACYFAGHFLIVRSLYL</sequence>
<protein>
    <recommendedName>
        <fullName>Uncharacterized membrane protein YhhN</fullName>
    </recommendedName>
</protein>
<keyword id="KW-1003">Cell membrane</keyword>
<keyword id="KW-0472">Membrane</keyword>
<keyword id="KW-1185">Reference proteome</keyword>
<keyword id="KW-0812">Transmembrane</keyword>
<keyword id="KW-1133">Transmembrane helix</keyword>
<proteinExistence type="inferred from homology"/>
<feature type="chain" id="PRO_0000201844" description="Uncharacterized membrane protein YhhN">
    <location>
        <begin position="1"/>
        <end position="208"/>
    </location>
</feature>
<feature type="transmembrane region" description="Helical" evidence="1">
    <location>
        <begin position="35"/>
        <end position="55"/>
    </location>
</feature>
<feature type="transmembrane region" description="Helical" evidence="1">
    <location>
        <begin position="76"/>
        <end position="96"/>
    </location>
</feature>
<feature type="transmembrane region" description="Helical" evidence="1">
    <location>
        <begin position="102"/>
        <end position="122"/>
    </location>
</feature>
<feature type="transmembrane region" description="Helical" evidence="1">
    <location>
        <begin position="132"/>
        <end position="152"/>
    </location>
</feature>
<feature type="transmembrane region" description="Helical" evidence="1">
    <location>
        <begin position="156"/>
        <end position="176"/>
    </location>
</feature>
<feature type="transmembrane region" description="Helical" evidence="1">
    <location>
        <begin position="188"/>
        <end position="208"/>
    </location>
</feature>
<feature type="sequence conflict" description="In Ref. 1; AAG58577." evidence="2" ref="1">
    <original>L</original>
    <variation>Q</variation>
    <location>
        <position position="56"/>
    </location>
</feature>
<comment type="subcellular location">
    <subcellularLocation>
        <location evidence="2">Cell membrane</location>
        <topology evidence="2">Multi-pass membrane protein</topology>
    </subcellularLocation>
</comment>
<comment type="similarity">
    <text evidence="2">Belongs to the TMEM86 family.</text>
</comment>